<dbReference type="EC" id="6.3.1.2"/>
<dbReference type="EMBL" id="X04002">
    <property type="protein sequence ID" value="CAA27632.1"/>
    <property type="molecule type" value="mRNA"/>
</dbReference>
<dbReference type="PIR" id="B26308">
    <property type="entry name" value="AJFBQA"/>
</dbReference>
<dbReference type="RefSeq" id="XP_007152660.1">
    <property type="nucleotide sequence ID" value="XM_007152598.1"/>
</dbReference>
<dbReference type="RefSeq" id="XP_068503198.1">
    <property type="nucleotide sequence ID" value="XM_068647097.1"/>
</dbReference>
<dbReference type="SMR" id="P04771"/>
<dbReference type="EnsemblPlants" id="ESW24654">
    <property type="protein sequence ID" value="ESW24654"/>
    <property type="gene ID" value="PHAVU_004G148300g"/>
</dbReference>
<dbReference type="GeneID" id="137837919"/>
<dbReference type="Gramene" id="ESW24654">
    <property type="protein sequence ID" value="ESW24654"/>
    <property type="gene ID" value="PHAVU_004G148300g"/>
</dbReference>
<dbReference type="eggNOG" id="KOG0683">
    <property type="taxonomic scope" value="Eukaryota"/>
</dbReference>
<dbReference type="OMA" id="HQSPWFG"/>
<dbReference type="OrthoDB" id="1936100at2759"/>
<dbReference type="PhylomeDB" id="P04771"/>
<dbReference type="BRENDA" id="6.3.1.2">
    <property type="organism ID" value="4746"/>
</dbReference>
<dbReference type="SABIO-RK" id="P04771"/>
<dbReference type="GO" id="GO:0005737">
    <property type="term" value="C:cytoplasm"/>
    <property type="evidence" value="ECO:0007669"/>
    <property type="project" value="UniProtKB-SubCell"/>
</dbReference>
<dbReference type="GO" id="GO:0005524">
    <property type="term" value="F:ATP binding"/>
    <property type="evidence" value="ECO:0007669"/>
    <property type="project" value="UniProtKB-KW"/>
</dbReference>
<dbReference type="GO" id="GO:0004356">
    <property type="term" value="F:glutamine synthetase activity"/>
    <property type="evidence" value="ECO:0007669"/>
    <property type="project" value="UniProtKB-EC"/>
</dbReference>
<dbReference type="GO" id="GO:0006542">
    <property type="term" value="P:glutamine biosynthetic process"/>
    <property type="evidence" value="ECO:0007669"/>
    <property type="project" value="InterPro"/>
</dbReference>
<dbReference type="FunFam" id="3.30.590.10:FF:000004">
    <property type="entry name" value="Glutamine synthetase"/>
    <property type="match status" value="1"/>
</dbReference>
<dbReference type="FunFam" id="3.10.20.70:FF:000003">
    <property type="entry name" value="Glutamine synthetase, chloroplastic"/>
    <property type="match status" value="1"/>
</dbReference>
<dbReference type="Gene3D" id="3.10.20.70">
    <property type="entry name" value="Glutamine synthetase, N-terminal domain"/>
    <property type="match status" value="1"/>
</dbReference>
<dbReference type="Gene3D" id="3.30.590.10">
    <property type="entry name" value="Glutamine synthetase/guanido kinase, catalytic domain"/>
    <property type="match status" value="1"/>
</dbReference>
<dbReference type="InterPro" id="IPR008147">
    <property type="entry name" value="Gln_synt_N"/>
</dbReference>
<dbReference type="InterPro" id="IPR036651">
    <property type="entry name" value="Gln_synt_N_sf"/>
</dbReference>
<dbReference type="InterPro" id="IPR014746">
    <property type="entry name" value="Gln_synth/guanido_kin_cat_dom"/>
</dbReference>
<dbReference type="InterPro" id="IPR008146">
    <property type="entry name" value="Gln_synth_cat_dom"/>
</dbReference>
<dbReference type="InterPro" id="IPR027303">
    <property type="entry name" value="Gln_synth_gly_rich_site"/>
</dbReference>
<dbReference type="InterPro" id="IPR027302">
    <property type="entry name" value="Gln_synth_N_conserv_site"/>
</dbReference>
<dbReference type="InterPro" id="IPR050292">
    <property type="entry name" value="Glutamine_Synthetase"/>
</dbReference>
<dbReference type="PANTHER" id="PTHR20852">
    <property type="entry name" value="GLUTAMINE SYNTHETASE"/>
    <property type="match status" value="1"/>
</dbReference>
<dbReference type="PANTHER" id="PTHR20852:SF110">
    <property type="entry name" value="GLUTAMINE SYNTHETASE"/>
    <property type="match status" value="1"/>
</dbReference>
<dbReference type="Pfam" id="PF00120">
    <property type="entry name" value="Gln-synt_C"/>
    <property type="match status" value="1"/>
</dbReference>
<dbReference type="Pfam" id="PF03951">
    <property type="entry name" value="Gln-synt_N"/>
    <property type="match status" value="1"/>
</dbReference>
<dbReference type="SMART" id="SM01230">
    <property type="entry name" value="Gln-synt_C"/>
    <property type="match status" value="1"/>
</dbReference>
<dbReference type="SUPFAM" id="SSF54368">
    <property type="entry name" value="Glutamine synthetase, N-terminal domain"/>
    <property type="match status" value="1"/>
</dbReference>
<dbReference type="SUPFAM" id="SSF55931">
    <property type="entry name" value="Glutamine synthetase/guanido kinase"/>
    <property type="match status" value="1"/>
</dbReference>
<dbReference type="PROSITE" id="PS00180">
    <property type="entry name" value="GLNA_1"/>
    <property type="match status" value="1"/>
</dbReference>
<dbReference type="PROSITE" id="PS00181">
    <property type="entry name" value="GLNA_ATP"/>
    <property type="match status" value="1"/>
</dbReference>
<dbReference type="PROSITE" id="PS51986">
    <property type="entry name" value="GS_BETA_GRASP"/>
    <property type="match status" value="1"/>
</dbReference>
<dbReference type="PROSITE" id="PS51987">
    <property type="entry name" value="GS_CATALYTIC"/>
    <property type="match status" value="1"/>
</dbReference>
<name>GLNA2_PHAVU</name>
<feature type="chain" id="PRO_0000153192" description="Glutamine synthetase PR-2">
    <location>
        <begin position="1"/>
        <end position="356"/>
    </location>
</feature>
<feature type="domain" description="GS beta-grasp" evidence="1">
    <location>
        <begin position="19"/>
        <end position="99"/>
    </location>
</feature>
<feature type="domain" description="GS catalytic" evidence="2">
    <location>
        <begin position="106"/>
        <end position="356"/>
    </location>
</feature>
<feature type="region of interest" description="Disordered" evidence="3">
    <location>
        <begin position="37"/>
        <end position="66"/>
    </location>
</feature>
<reference key="1">
    <citation type="journal article" date="1986" name="EMBO J.">
        <title>Primary structure and differential expression of glutamine synthetase genes in nodules, roots and leaves of Phaseolus vulgaris.</title>
        <authorList>
            <person name="Gebhardt C."/>
            <person name="Oliver J.E."/>
            <person name="Forde B.G."/>
            <person name="Saarelainen R."/>
            <person name="Miflin B.J."/>
        </authorList>
    </citation>
    <scope>NUCLEOTIDE SEQUENCE [MRNA]</scope>
</reference>
<sequence>MSLLSDLINLNLSESTEKIIAEYIWVGGSGMDLRSKARTLPGPVDDPAKLPKWNYDGSSTDQAPGDDSEVILYPQAIFKDPFRRGNNILVICDVYTPAGEPLPTNKRYDAAKIFSHPDVVAEVPWYGIEQEYTLLQKDVNWPLGWPLGGYPGPQGPYYCGVGADKAYGRDIVDAHYKACVYAGINISGINGEVMPGQWEFQVGPSVGISAGDEVWAARYILERITELAGAVVSFDPKPIPGDWNGAGAHSNYSTKSMREEGGYEVIKKAIEKLGLRHKEHIAAYGKGNERRLTGRHETADINTFSWGVANRGSSVRVGRDTEKQGKGYFEDRRPASNMDPYVVTSMIAETTILWKP</sequence>
<accession>P04771</accession>
<comment type="catalytic activity">
    <reaction>
        <text>L-glutamate + NH4(+) + ATP = L-glutamine + ADP + phosphate + H(+)</text>
        <dbReference type="Rhea" id="RHEA:16169"/>
        <dbReference type="ChEBI" id="CHEBI:15378"/>
        <dbReference type="ChEBI" id="CHEBI:28938"/>
        <dbReference type="ChEBI" id="CHEBI:29985"/>
        <dbReference type="ChEBI" id="CHEBI:30616"/>
        <dbReference type="ChEBI" id="CHEBI:43474"/>
        <dbReference type="ChEBI" id="CHEBI:58359"/>
        <dbReference type="ChEBI" id="CHEBI:456216"/>
        <dbReference type="EC" id="6.3.1.2"/>
    </reaction>
</comment>
<comment type="subunit">
    <text>Homooctamer.</text>
</comment>
<comment type="subcellular location">
    <subcellularLocation>
        <location>Cytoplasm</location>
    </subcellularLocation>
</comment>
<comment type="tissue specificity">
    <text>Roots.</text>
</comment>
<comment type="miscellaneous">
    <text>There are at least four isozymes of this enzyme in P.vulgaris.</text>
</comment>
<comment type="miscellaneous">
    <text>Irreversibly inhibited by the herbicide L-phosphinothricin (PPT).</text>
</comment>
<comment type="similarity">
    <text evidence="4">Belongs to the glutamine synthetase family.</text>
</comment>
<protein>
    <recommendedName>
        <fullName>Glutamine synthetase PR-2</fullName>
        <ecNumber>6.3.1.2</ecNumber>
    </recommendedName>
    <alternativeName>
        <fullName>Gln isozyme alpha</fullName>
    </alternativeName>
    <alternativeName>
        <fullName>Glutamate--ammonia ligase</fullName>
    </alternativeName>
</protein>
<proteinExistence type="evidence at transcript level"/>
<organism>
    <name type="scientific">Phaseolus vulgaris</name>
    <name type="common">Kidney bean</name>
    <name type="synonym">French bean</name>
    <dbReference type="NCBI Taxonomy" id="3885"/>
    <lineage>
        <taxon>Eukaryota</taxon>
        <taxon>Viridiplantae</taxon>
        <taxon>Streptophyta</taxon>
        <taxon>Embryophyta</taxon>
        <taxon>Tracheophyta</taxon>
        <taxon>Spermatophyta</taxon>
        <taxon>Magnoliopsida</taxon>
        <taxon>eudicotyledons</taxon>
        <taxon>Gunneridae</taxon>
        <taxon>Pentapetalae</taxon>
        <taxon>rosids</taxon>
        <taxon>fabids</taxon>
        <taxon>Fabales</taxon>
        <taxon>Fabaceae</taxon>
        <taxon>Papilionoideae</taxon>
        <taxon>50 kb inversion clade</taxon>
        <taxon>NPAAA clade</taxon>
        <taxon>indigoferoid/millettioid clade</taxon>
        <taxon>Phaseoleae</taxon>
        <taxon>Phaseolus</taxon>
    </lineage>
</organism>
<keyword id="KW-0067">ATP-binding</keyword>
<keyword id="KW-0963">Cytoplasm</keyword>
<keyword id="KW-0436">Ligase</keyword>
<keyword id="KW-0535">Nitrogen fixation</keyword>
<keyword id="KW-0547">Nucleotide-binding</keyword>
<evidence type="ECO:0000255" key="1">
    <source>
        <dbReference type="PROSITE-ProRule" id="PRU01330"/>
    </source>
</evidence>
<evidence type="ECO:0000255" key="2">
    <source>
        <dbReference type="PROSITE-ProRule" id="PRU01331"/>
    </source>
</evidence>
<evidence type="ECO:0000256" key="3">
    <source>
        <dbReference type="SAM" id="MobiDB-lite"/>
    </source>
</evidence>
<evidence type="ECO:0000305" key="4"/>